<proteinExistence type="inferred from homology"/>
<dbReference type="EMBL" id="FM180568">
    <property type="protein sequence ID" value="CAS07591.1"/>
    <property type="molecule type" value="Genomic_DNA"/>
</dbReference>
<dbReference type="RefSeq" id="WP_001091509.1">
    <property type="nucleotide sequence ID" value="NC_011601.1"/>
</dbReference>
<dbReference type="SMR" id="B7UI88"/>
<dbReference type="KEGG" id="ecg:E2348C_0043"/>
<dbReference type="HOGENOM" id="CLU_034178_0_1_6"/>
<dbReference type="UniPathway" id="UPA00117"/>
<dbReference type="Proteomes" id="UP000008205">
    <property type="component" value="Chromosome"/>
</dbReference>
<dbReference type="GO" id="GO:0009055">
    <property type="term" value="F:electron transfer activity"/>
    <property type="evidence" value="ECO:0007669"/>
    <property type="project" value="InterPro"/>
</dbReference>
<dbReference type="GO" id="GO:0050660">
    <property type="term" value="F:flavin adenine dinucleotide binding"/>
    <property type="evidence" value="ECO:0007669"/>
    <property type="project" value="InterPro"/>
</dbReference>
<dbReference type="GO" id="GO:0009437">
    <property type="term" value="P:carnitine metabolic process"/>
    <property type="evidence" value="ECO:0007669"/>
    <property type="project" value="UniProtKB-UniRule"/>
</dbReference>
<dbReference type="GO" id="GO:0033539">
    <property type="term" value="P:fatty acid beta-oxidation using acyl-CoA dehydrogenase"/>
    <property type="evidence" value="ECO:0007669"/>
    <property type="project" value="TreeGrafter"/>
</dbReference>
<dbReference type="FunFam" id="3.40.50.1220:FF:000004">
    <property type="entry name" value="Electron transfer flavoprotein"/>
    <property type="match status" value="1"/>
</dbReference>
<dbReference type="FunFam" id="3.40.50.620:FF:000067">
    <property type="entry name" value="Protein FixB"/>
    <property type="match status" value="1"/>
</dbReference>
<dbReference type="Gene3D" id="3.40.50.620">
    <property type="entry name" value="HUPs"/>
    <property type="match status" value="1"/>
</dbReference>
<dbReference type="Gene3D" id="3.40.50.1220">
    <property type="entry name" value="TPP-binding domain"/>
    <property type="match status" value="1"/>
</dbReference>
<dbReference type="HAMAP" id="MF_01056">
    <property type="entry name" value="FixB"/>
    <property type="match status" value="1"/>
</dbReference>
<dbReference type="InterPro" id="IPR029035">
    <property type="entry name" value="DHS-like_NAD/FAD-binding_dom"/>
</dbReference>
<dbReference type="InterPro" id="IPR014730">
    <property type="entry name" value="ETF_a/b_N"/>
</dbReference>
<dbReference type="InterPro" id="IPR001308">
    <property type="entry name" value="ETF_a/FixB"/>
</dbReference>
<dbReference type="InterPro" id="IPR014731">
    <property type="entry name" value="ETF_asu_C"/>
</dbReference>
<dbReference type="InterPro" id="IPR018206">
    <property type="entry name" value="ETF_asu_C_CS"/>
</dbReference>
<dbReference type="InterPro" id="IPR023461">
    <property type="entry name" value="FixB"/>
</dbReference>
<dbReference type="InterPro" id="IPR014729">
    <property type="entry name" value="Rossmann-like_a/b/a_fold"/>
</dbReference>
<dbReference type="NCBIfam" id="NF002889">
    <property type="entry name" value="PRK03363.1"/>
    <property type="match status" value="1"/>
</dbReference>
<dbReference type="PANTHER" id="PTHR43153">
    <property type="entry name" value="ELECTRON TRANSFER FLAVOPROTEIN ALPHA"/>
    <property type="match status" value="1"/>
</dbReference>
<dbReference type="PANTHER" id="PTHR43153:SF5">
    <property type="entry name" value="PROTEIN FIXB-RELATED"/>
    <property type="match status" value="1"/>
</dbReference>
<dbReference type="Pfam" id="PF01012">
    <property type="entry name" value="ETF"/>
    <property type="match status" value="1"/>
</dbReference>
<dbReference type="Pfam" id="PF00766">
    <property type="entry name" value="ETF_alpha"/>
    <property type="match status" value="1"/>
</dbReference>
<dbReference type="PIRSF" id="PIRSF000089">
    <property type="entry name" value="Electra_flavoP_a"/>
    <property type="match status" value="1"/>
</dbReference>
<dbReference type="SMART" id="SM00893">
    <property type="entry name" value="ETF"/>
    <property type="match status" value="1"/>
</dbReference>
<dbReference type="SUPFAM" id="SSF52402">
    <property type="entry name" value="Adenine nucleotide alpha hydrolases-like"/>
    <property type="match status" value="1"/>
</dbReference>
<dbReference type="SUPFAM" id="SSF52467">
    <property type="entry name" value="DHS-like NAD/FAD-binding domain"/>
    <property type="match status" value="1"/>
</dbReference>
<dbReference type="PROSITE" id="PS00696">
    <property type="entry name" value="ETF_ALPHA"/>
    <property type="match status" value="1"/>
</dbReference>
<protein>
    <recommendedName>
        <fullName evidence="1">Protein FixB</fullName>
    </recommendedName>
</protein>
<reference key="1">
    <citation type="journal article" date="2009" name="J. Bacteriol.">
        <title>Complete genome sequence and comparative genome analysis of enteropathogenic Escherichia coli O127:H6 strain E2348/69.</title>
        <authorList>
            <person name="Iguchi A."/>
            <person name="Thomson N.R."/>
            <person name="Ogura Y."/>
            <person name="Saunders D."/>
            <person name="Ooka T."/>
            <person name="Henderson I.R."/>
            <person name="Harris D."/>
            <person name="Asadulghani M."/>
            <person name="Kurokawa K."/>
            <person name="Dean P."/>
            <person name="Kenny B."/>
            <person name="Quail M.A."/>
            <person name="Thurston S."/>
            <person name="Dougan G."/>
            <person name="Hayashi T."/>
            <person name="Parkhill J."/>
            <person name="Frankel G."/>
        </authorList>
    </citation>
    <scope>NUCLEOTIDE SEQUENCE [LARGE SCALE GENOMIC DNA]</scope>
    <source>
        <strain>E2348/69 / EPEC</strain>
    </source>
</reference>
<gene>
    <name evidence="1" type="primary">fixB</name>
    <name type="ordered locus">E2348C_0043</name>
</gene>
<keyword id="KW-0249">Electron transport</keyword>
<keyword id="KW-0274">FAD</keyword>
<keyword id="KW-0285">Flavoprotein</keyword>
<keyword id="KW-1185">Reference proteome</keyword>
<keyword id="KW-0813">Transport</keyword>
<name>FIXB_ECO27</name>
<accession>B7UI88</accession>
<comment type="function">
    <text evidence="1">Required for anaerobic carnitine reduction. May bring reductant to CaiA.</text>
</comment>
<comment type="pathway">
    <text evidence="1">Amine and polyamine metabolism; carnitine metabolism.</text>
</comment>
<comment type="subunit">
    <text evidence="1">Heterodimer of FixA and FixB.</text>
</comment>
<comment type="similarity">
    <text evidence="1">Belongs to the ETF alpha-subunit/FixB family.</text>
</comment>
<organism>
    <name type="scientific">Escherichia coli O127:H6 (strain E2348/69 / EPEC)</name>
    <dbReference type="NCBI Taxonomy" id="574521"/>
    <lineage>
        <taxon>Bacteria</taxon>
        <taxon>Pseudomonadati</taxon>
        <taxon>Pseudomonadota</taxon>
        <taxon>Gammaproteobacteria</taxon>
        <taxon>Enterobacterales</taxon>
        <taxon>Enterobacteriaceae</taxon>
        <taxon>Escherichia</taxon>
    </lineage>
</organism>
<feature type="chain" id="PRO_1000149638" description="Protein FixB">
    <location>
        <begin position="1"/>
        <end position="313"/>
    </location>
</feature>
<feature type="binding site" evidence="1">
    <location>
        <begin position="255"/>
        <end position="283"/>
    </location>
    <ligand>
        <name>FAD</name>
        <dbReference type="ChEBI" id="CHEBI:57692"/>
    </ligand>
</feature>
<evidence type="ECO:0000255" key="1">
    <source>
        <dbReference type="HAMAP-Rule" id="MF_01056"/>
    </source>
</evidence>
<sequence length="313" mass="33512">MNTFSQVWVFSDTPSRLPELMNGAQALANQINTFVLNDADGAQAIQLGANHVWKLSGKPDDRMIEDYADVMADTIRQHGADGLVLLPNTRRGKLLAAKLGYRLNAAVSNDASAVSVQDGKATVKHMVYGGLAIGEERIATPYAVLTISSGTFDVAQPDASRTGETHTVEWQAPAVAITRTATQARQSNSVDLDKARLVVSVGRGIGSKENIALAEQLCKAIGAELACSRPVAENEKWMEHERYVGISNLMLKPELYLAVGISGQIQHMVGANASQTIFAINKDKNAPIFQFADYGIVGDAVKILPALTAALAR</sequence>